<proteinExistence type="predicted"/>
<protein>
    <recommendedName>
        <fullName>Uncharacterized 15.6 kDa protein in mobL 3'region</fullName>
    </recommendedName>
    <alternativeName>
        <fullName>ORF 5</fullName>
    </alternativeName>
</protein>
<keyword id="KW-0614">Plasmid</keyword>
<sequence length="149" mass="15662">MPVAIMTATCLGVGFVVLVGVLFKLPVGHGARRVQGNICRYTVTVGKRTGVAYGERLPLLCREFGRQGDFYLPDEDGIAALVVRFDAVPELGSVGGSTTRQDEFGVQNATLAGVVMHQAGTLVGDLHTCAIGRRSSRGTSGAATDRLRG</sequence>
<reference key="1">
    <citation type="journal article" date="1990" name="Mol. Microbiol.">
        <title>The mobilization and origin of transfer regions of a Thiobacillus ferrooxidans plasmid: relatedness to plasmids RSF1010 and pSC101.</title>
        <authorList>
            <person name="Drolet M."/>
            <person name="Zanga P."/>
            <person name="Lau P.C.K."/>
        </authorList>
    </citation>
    <scope>NUCLEOTIDE SEQUENCE [GENOMIC DNA]</scope>
    <source>
        <strain>ATCC 33020 / DSM 29468 / JCM 18981 / 11Fe</strain>
    </source>
</reference>
<organism>
    <name type="scientific">Acidithiobacillus ferridurans</name>
    <dbReference type="NCBI Taxonomy" id="1232575"/>
    <lineage>
        <taxon>Bacteria</taxon>
        <taxon>Pseudomonadati</taxon>
        <taxon>Pseudomonadota</taxon>
        <taxon>Acidithiobacillia</taxon>
        <taxon>Acidithiobacillales</taxon>
        <taxon>Acidithiobacillaceae</taxon>
        <taxon>Acidithiobacillus</taxon>
    </lineage>
</organism>
<name>YML3_ACIFI</name>
<dbReference type="EMBL" id="X52699">
    <property type="protein sequence ID" value="CAA36929.1"/>
    <property type="molecule type" value="Genomic_DNA"/>
</dbReference>
<dbReference type="PIR" id="S12192">
    <property type="entry name" value="S12192"/>
</dbReference>
<dbReference type="AntiFam" id="ANF00179">
    <property type="entry name" value="Shadow ORF (opposite mobL)"/>
</dbReference>
<feature type="chain" id="PRO_0000068506" description="Uncharacterized 15.6 kDa protein in mobL 3'region">
    <location>
        <begin position="1"/>
        <end position="149"/>
    </location>
</feature>
<geneLocation type="plasmid">
    <name>pTF1</name>
</geneLocation>
<accession>P20089</accession>